<gene>
    <name type="primary">SIFV0052</name>
</gene>
<organismHost>
    <name type="scientific">Saccharolobus islandicus</name>
    <name type="common">Sulfolobus islandicus</name>
    <dbReference type="NCBI Taxonomy" id="43080"/>
</organismHost>
<proteinExistence type="predicted"/>
<protein>
    <recommendedName>
        <fullName>Uncharacterized protein 52</fullName>
    </recommendedName>
</protein>
<comment type="subcellular location">
    <subcellularLocation>
        <location evidence="2">Host membrane</location>
        <topology evidence="2">Single-pass membrane protein</topology>
    </subcellularLocation>
</comment>
<feature type="chain" id="PRO_0000385431" description="Uncharacterized protein 52">
    <location>
        <begin position="1"/>
        <end position="75"/>
    </location>
</feature>
<feature type="transmembrane region" description="Helical" evidence="1">
    <location>
        <begin position="49"/>
        <end position="69"/>
    </location>
</feature>
<accession>Q914I0</accession>
<name>Y052_SIFVH</name>
<sequence length="75" mass="8500">MSCSYEFIVDVNVCSTTYNRRYFHKFQLHSLVNTNVNVNKKYAYPSAGVDIVAVATTLPFIVAVICIVFDEVNVF</sequence>
<keyword id="KW-1043">Host membrane</keyword>
<keyword id="KW-0472">Membrane</keyword>
<keyword id="KW-1185">Reference proteome</keyword>
<keyword id="KW-0812">Transmembrane</keyword>
<keyword id="KW-1133">Transmembrane helix</keyword>
<dbReference type="EMBL" id="AF440571">
    <property type="protein sequence ID" value="AAL27761.1"/>
    <property type="molecule type" value="Genomic_DNA"/>
</dbReference>
<dbReference type="RefSeq" id="NP_445715.1">
    <property type="nucleotide sequence ID" value="NC_003214.2"/>
</dbReference>
<dbReference type="GeneID" id="922325"/>
<dbReference type="KEGG" id="vg:922325"/>
<dbReference type="Proteomes" id="UP000007017">
    <property type="component" value="Segment"/>
</dbReference>
<dbReference type="GO" id="GO:0033644">
    <property type="term" value="C:host cell membrane"/>
    <property type="evidence" value="ECO:0007669"/>
    <property type="project" value="UniProtKB-SubCell"/>
</dbReference>
<dbReference type="GO" id="GO:0016020">
    <property type="term" value="C:membrane"/>
    <property type="evidence" value="ECO:0007669"/>
    <property type="project" value="UniProtKB-KW"/>
</dbReference>
<reference key="1">
    <citation type="journal article" date="2000" name="Virology">
        <title>A novel lipothrixvirus, SIFV, of the extremely thermophilic crenarchaeon Sulfolobus.</title>
        <authorList>
            <person name="Arnold H.P."/>
            <person name="Zillig W."/>
            <person name="Ziese U."/>
            <person name="Holz I."/>
            <person name="Crosby M."/>
            <person name="Utterback T."/>
            <person name="Weidmann J.F."/>
            <person name="Umayam L.A."/>
            <person name="Teffera K."/>
            <person name="Kristjanson J.K."/>
            <person name="Klenk H.P."/>
            <person name="Nelson K.E."/>
            <person name="Fraser C.M."/>
        </authorList>
    </citation>
    <scope>NUCLEOTIDE SEQUENCE [GENOMIC DNA]</scope>
</reference>
<organism>
    <name type="scientific">Sulfolobus islandicus filamentous virus (isolate Iceland/Hveragerdi)</name>
    <name type="common">SIFV</name>
    <dbReference type="NCBI Taxonomy" id="654908"/>
    <lineage>
        <taxon>Viruses</taxon>
        <taxon>Adnaviria</taxon>
        <taxon>Zilligvirae</taxon>
        <taxon>Taleaviricota</taxon>
        <taxon>Tokiviricetes</taxon>
        <taxon>Ligamenvirales</taxon>
        <taxon>Lipothrixviridae</taxon>
        <taxon>Betalipothrixvirus</taxon>
        <taxon>Sulfolobus islandicus filamentous virus</taxon>
    </lineage>
</organism>
<evidence type="ECO:0000255" key="1"/>
<evidence type="ECO:0000305" key="2"/>